<evidence type="ECO:0000255" key="1">
    <source>
        <dbReference type="HAMAP-Rule" id="MF_00214"/>
    </source>
</evidence>
<dbReference type="EC" id="4.2.1.10" evidence="1"/>
<dbReference type="EMBL" id="CU928163">
    <property type="protein sequence ID" value="CAR13178.1"/>
    <property type="molecule type" value="Genomic_DNA"/>
</dbReference>
<dbReference type="RefSeq" id="WP_000860193.1">
    <property type="nucleotide sequence ID" value="NC_011751.1"/>
</dbReference>
<dbReference type="RefSeq" id="YP_002412710.1">
    <property type="nucleotide sequence ID" value="NC_011751.1"/>
</dbReference>
<dbReference type="SMR" id="B7N529"/>
<dbReference type="STRING" id="585056.ECUMN_1982"/>
<dbReference type="KEGG" id="eum:ECUMN_1982"/>
<dbReference type="PATRIC" id="fig|585056.7.peg.2168"/>
<dbReference type="HOGENOM" id="CLU_064444_0_0_6"/>
<dbReference type="UniPathway" id="UPA00053">
    <property type="reaction ID" value="UER00086"/>
</dbReference>
<dbReference type="Proteomes" id="UP000007097">
    <property type="component" value="Chromosome"/>
</dbReference>
<dbReference type="GO" id="GO:0003855">
    <property type="term" value="F:3-dehydroquinate dehydratase activity"/>
    <property type="evidence" value="ECO:0007669"/>
    <property type="project" value="UniProtKB-UniRule"/>
</dbReference>
<dbReference type="GO" id="GO:0046279">
    <property type="term" value="P:3,4-dihydroxybenzoate biosynthetic process"/>
    <property type="evidence" value="ECO:0007669"/>
    <property type="project" value="TreeGrafter"/>
</dbReference>
<dbReference type="GO" id="GO:0008652">
    <property type="term" value="P:amino acid biosynthetic process"/>
    <property type="evidence" value="ECO:0007669"/>
    <property type="project" value="UniProtKB-KW"/>
</dbReference>
<dbReference type="GO" id="GO:0009073">
    <property type="term" value="P:aromatic amino acid family biosynthetic process"/>
    <property type="evidence" value="ECO:0007669"/>
    <property type="project" value="UniProtKB-KW"/>
</dbReference>
<dbReference type="GO" id="GO:0009423">
    <property type="term" value="P:chorismate biosynthetic process"/>
    <property type="evidence" value="ECO:0007669"/>
    <property type="project" value="UniProtKB-UniRule"/>
</dbReference>
<dbReference type="CDD" id="cd00502">
    <property type="entry name" value="DHQase_I"/>
    <property type="match status" value="1"/>
</dbReference>
<dbReference type="FunFam" id="3.20.20.70:FF:000047">
    <property type="entry name" value="3-dehydroquinate dehydratase"/>
    <property type="match status" value="1"/>
</dbReference>
<dbReference type="Gene3D" id="3.20.20.70">
    <property type="entry name" value="Aldolase class I"/>
    <property type="match status" value="1"/>
</dbReference>
<dbReference type="HAMAP" id="MF_00214">
    <property type="entry name" value="AroD"/>
    <property type="match status" value="1"/>
</dbReference>
<dbReference type="InterPro" id="IPR018508">
    <property type="entry name" value="3-dehydroquinate_DH_AS"/>
</dbReference>
<dbReference type="InterPro" id="IPR013785">
    <property type="entry name" value="Aldolase_TIM"/>
</dbReference>
<dbReference type="InterPro" id="IPR001381">
    <property type="entry name" value="DHquinase_I"/>
</dbReference>
<dbReference type="InterPro" id="IPR050146">
    <property type="entry name" value="Type-I_3-dehydroquinase"/>
</dbReference>
<dbReference type="NCBIfam" id="TIGR01093">
    <property type="entry name" value="aroD"/>
    <property type="match status" value="1"/>
</dbReference>
<dbReference type="PANTHER" id="PTHR43699">
    <property type="entry name" value="3-DEHYDROQUINATE DEHYDRATASE"/>
    <property type="match status" value="1"/>
</dbReference>
<dbReference type="PANTHER" id="PTHR43699:SF1">
    <property type="entry name" value="3-DEHYDROQUINATE DEHYDRATASE"/>
    <property type="match status" value="1"/>
</dbReference>
<dbReference type="Pfam" id="PF01487">
    <property type="entry name" value="DHquinase_I"/>
    <property type="match status" value="1"/>
</dbReference>
<dbReference type="SUPFAM" id="SSF51569">
    <property type="entry name" value="Aldolase"/>
    <property type="match status" value="1"/>
</dbReference>
<dbReference type="PROSITE" id="PS01028">
    <property type="entry name" value="DEHYDROQUINASE_I"/>
    <property type="match status" value="1"/>
</dbReference>
<name>AROD_ECOLU</name>
<gene>
    <name evidence="1" type="primary">aroD</name>
    <name type="ordered locus">ECUMN_1982</name>
</gene>
<organism>
    <name type="scientific">Escherichia coli O17:K52:H18 (strain UMN026 / ExPEC)</name>
    <dbReference type="NCBI Taxonomy" id="585056"/>
    <lineage>
        <taxon>Bacteria</taxon>
        <taxon>Pseudomonadati</taxon>
        <taxon>Pseudomonadota</taxon>
        <taxon>Gammaproteobacteria</taxon>
        <taxon>Enterobacterales</taxon>
        <taxon>Enterobacteriaceae</taxon>
        <taxon>Escherichia</taxon>
    </lineage>
</organism>
<sequence length="252" mass="27452">MKTVTVKDLVIGTGAPKIIVSLMAKDIASVKSEALAYREADFDILEWRVDHYADLSNVDSVMAAAKILRKTMPEKPLLFTFRSAKEGGEQAISTEAYIALNRAAIDSGLVDMIDLELFTGDDQVKETVAYAHAHDVKVVMSNHDFHKTPEAEEIIARLRKMQSFDADIPKIALMPQSTSDVLTLLAATLEMQEQYADRPIITMSMAKTGVISRLAGEVFGSAATFGAVKKASAPGQISVNDLRTVLTILHQA</sequence>
<reference key="1">
    <citation type="journal article" date="2009" name="PLoS Genet.">
        <title>Organised genome dynamics in the Escherichia coli species results in highly diverse adaptive paths.</title>
        <authorList>
            <person name="Touchon M."/>
            <person name="Hoede C."/>
            <person name="Tenaillon O."/>
            <person name="Barbe V."/>
            <person name="Baeriswyl S."/>
            <person name="Bidet P."/>
            <person name="Bingen E."/>
            <person name="Bonacorsi S."/>
            <person name="Bouchier C."/>
            <person name="Bouvet O."/>
            <person name="Calteau A."/>
            <person name="Chiapello H."/>
            <person name="Clermont O."/>
            <person name="Cruveiller S."/>
            <person name="Danchin A."/>
            <person name="Diard M."/>
            <person name="Dossat C."/>
            <person name="Karoui M.E."/>
            <person name="Frapy E."/>
            <person name="Garry L."/>
            <person name="Ghigo J.M."/>
            <person name="Gilles A.M."/>
            <person name="Johnson J."/>
            <person name="Le Bouguenec C."/>
            <person name="Lescat M."/>
            <person name="Mangenot S."/>
            <person name="Martinez-Jehanne V."/>
            <person name="Matic I."/>
            <person name="Nassif X."/>
            <person name="Oztas S."/>
            <person name="Petit M.A."/>
            <person name="Pichon C."/>
            <person name="Rouy Z."/>
            <person name="Ruf C.S."/>
            <person name="Schneider D."/>
            <person name="Tourret J."/>
            <person name="Vacherie B."/>
            <person name="Vallenet D."/>
            <person name="Medigue C."/>
            <person name="Rocha E.P.C."/>
            <person name="Denamur E."/>
        </authorList>
    </citation>
    <scope>NUCLEOTIDE SEQUENCE [LARGE SCALE GENOMIC DNA]</scope>
    <source>
        <strain>UMN026 / ExPEC</strain>
    </source>
</reference>
<accession>B7N529</accession>
<feature type="chain" id="PRO_1000189569" description="3-dehydroquinate dehydratase">
    <location>
        <begin position="1"/>
        <end position="252"/>
    </location>
</feature>
<feature type="active site" description="Proton donor/acceptor" evidence="1">
    <location>
        <position position="143"/>
    </location>
</feature>
<feature type="active site" description="Schiff-base intermediate with substrate" evidence="1">
    <location>
        <position position="170"/>
    </location>
</feature>
<feature type="binding site" evidence="1">
    <location>
        <position position="21"/>
    </location>
    <ligand>
        <name>3-dehydroquinate</name>
        <dbReference type="ChEBI" id="CHEBI:32364"/>
    </ligand>
</feature>
<feature type="binding site" evidence="1">
    <location>
        <begin position="46"/>
        <end position="48"/>
    </location>
    <ligand>
        <name>3-dehydroquinate</name>
        <dbReference type="ChEBI" id="CHEBI:32364"/>
    </ligand>
</feature>
<feature type="binding site" evidence="1">
    <location>
        <position position="82"/>
    </location>
    <ligand>
        <name>3-dehydroquinate</name>
        <dbReference type="ChEBI" id="CHEBI:32364"/>
    </ligand>
</feature>
<feature type="binding site" evidence="1">
    <location>
        <position position="213"/>
    </location>
    <ligand>
        <name>3-dehydroquinate</name>
        <dbReference type="ChEBI" id="CHEBI:32364"/>
    </ligand>
</feature>
<feature type="binding site" evidence="1">
    <location>
        <position position="232"/>
    </location>
    <ligand>
        <name>3-dehydroquinate</name>
        <dbReference type="ChEBI" id="CHEBI:32364"/>
    </ligand>
</feature>
<feature type="binding site" evidence="1">
    <location>
        <position position="236"/>
    </location>
    <ligand>
        <name>3-dehydroquinate</name>
        <dbReference type="ChEBI" id="CHEBI:32364"/>
    </ligand>
</feature>
<proteinExistence type="inferred from homology"/>
<keyword id="KW-0028">Amino-acid biosynthesis</keyword>
<keyword id="KW-0057">Aromatic amino acid biosynthesis</keyword>
<keyword id="KW-0456">Lyase</keyword>
<keyword id="KW-0704">Schiff base</keyword>
<protein>
    <recommendedName>
        <fullName evidence="1">3-dehydroquinate dehydratase</fullName>
        <shortName evidence="1">3-dehydroquinase</shortName>
        <ecNumber evidence="1">4.2.1.10</ecNumber>
    </recommendedName>
    <alternativeName>
        <fullName evidence="1">Type I DHQase</fullName>
    </alternativeName>
    <alternativeName>
        <fullName evidence="1">Type I dehydroquinase</fullName>
        <shortName evidence="1">DHQ1</shortName>
    </alternativeName>
</protein>
<comment type="function">
    <text evidence="1">Involved in the third step of the chorismate pathway, which leads to the biosynthesis of aromatic amino acids. Catalyzes the cis-dehydration of 3-dehydroquinate (DHQ) and introduces the first double bond of the aromatic ring to yield 3-dehydroshikimate.</text>
</comment>
<comment type="catalytic activity">
    <reaction evidence="1">
        <text>3-dehydroquinate = 3-dehydroshikimate + H2O</text>
        <dbReference type="Rhea" id="RHEA:21096"/>
        <dbReference type="ChEBI" id="CHEBI:15377"/>
        <dbReference type="ChEBI" id="CHEBI:16630"/>
        <dbReference type="ChEBI" id="CHEBI:32364"/>
        <dbReference type="EC" id="4.2.1.10"/>
    </reaction>
</comment>
<comment type="pathway">
    <text evidence="1">Metabolic intermediate biosynthesis; chorismate biosynthesis; chorismate from D-erythrose 4-phosphate and phosphoenolpyruvate: step 3/7.</text>
</comment>
<comment type="subunit">
    <text evidence="1">Homodimer.</text>
</comment>
<comment type="similarity">
    <text evidence="1">Belongs to the type-I 3-dehydroquinase family.</text>
</comment>